<dbReference type="EMBL" id="AK011253">
    <property type="protein sequence ID" value="BAB27495.1"/>
    <property type="molecule type" value="mRNA"/>
</dbReference>
<dbReference type="EMBL" id="AK160544">
    <property type="protein sequence ID" value="BAE35861.1"/>
    <property type="molecule type" value="mRNA"/>
</dbReference>
<dbReference type="EMBL" id="BC013060">
    <property type="protein sequence ID" value="AAH13060.1"/>
    <property type="molecule type" value="mRNA"/>
</dbReference>
<dbReference type="CCDS" id="CCDS25884.1"/>
<dbReference type="RefSeq" id="NP_080116.2">
    <property type="nucleotide sequence ID" value="NM_025840.3"/>
</dbReference>
<dbReference type="SMR" id="Q91VK1"/>
<dbReference type="BioGRID" id="211804">
    <property type="interactions" value="9"/>
</dbReference>
<dbReference type="FunCoup" id="Q91VK1">
    <property type="interactions" value="2185"/>
</dbReference>
<dbReference type="IntAct" id="Q91VK1">
    <property type="interactions" value="4"/>
</dbReference>
<dbReference type="MINT" id="Q91VK1"/>
<dbReference type="STRING" id="10090.ENSMUSP00000020856"/>
<dbReference type="iPTMnet" id="Q91VK1"/>
<dbReference type="PhosphoSitePlus" id="Q91VK1"/>
<dbReference type="SwissPalm" id="Q91VK1"/>
<dbReference type="jPOST" id="Q91VK1"/>
<dbReference type="PaxDb" id="10090-ENSMUSP00000020856"/>
<dbReference type="PeptideAtlas" id="Q91VK1"/>
<dbReference type="ProteomicsDB" id="273781"/>
<dbReference type="Pumba" id="Q91VK1"/>
<dbReference type="Antibodypedia" id="11817">
    <property type="antibodies" value="106 antibodies from 27 providers"/>
</dbReference>
<dbReference type="DNASU" id="66912"/>
<dbReference type="Ensembl" id="ENSMUST00000020856.6">
    <property type="protein sequence ID" value="ENSMUSP00000020856.5"/>
    <property type="gene ID" value="ENSMUSG00000020547.6"/>
</dbReference>
<dbReference type="GeneID" id="66912"/>
<dbReference type="KEGG" id="mmu:66912"/>
<dbReference type="UCSC" id="uc007njp.2">
    <property type="organism name" value="mouse"/>
</dbReference>
<dbReference type="AGR" id="MGI:1914162"/>
<dbReference type="CTD" id="28969"/>
<dbReference type="MGI" id="MGI:1914162">
    <property type="gene designation" value="Bzw2"/>
</dbReference>
<dbReference type="VEuPathDB" id="HostDB:ENSMUSG00000020547"/>
<dbReference type="eggNOG" id="KOG2297">
    <property type="taxonomic scope" value="Eukaryota"/>
</dbReference>
<dbReference type="GeneTree" id="ENSGT00390000012561"/>
<dbReference type="HOGENOM" id="CLU_032849_0_1_1"/>
<dbReference type="InParanoid" id="Q91VK1"/>
<dbReference type="OMA" id="ELIQCIW"/>
<dbReference type="OrthoDB" id="1727522at2759"/>
<dbReference type="PhylomeDB" id="Q91VK1"/>
<dbReference type="TreeFam" id="TF324313"/>
<dbReference type="BioGRID-ORCS" id="66912">
    <property type="hits" value="5 hits in 78 CRISPR screens"/>
</dbReference>
<dbReference type="ChiTaRS" id="Bzw2">
    <property type="organism name" value="mouse"/>
</dbReference>
<dbReference type="PRO" id="PR:Q91VK1"/>
<dbReference type="Proteomes" id="UP000000589">
    <property type="component" value="Chromosome 12"/>
</dbReference>
<dbReference type="RNAct" id="Q91VK1">
    <property type="molecule type" value="protein"/>
</dbReference>
<dbReference type="Bgee" id="ENSMUSG00000020547">
    <property type="expression patterns" value="Expressed in cortical plate and 268 other cell types or tissues"/>
</dbReference>
<dbReference type="ExpressionAtlas" id="Q91VK1">
    <property type="expression patterns" value="baseline and differential"/>
</dbReference>
<dbReference type="GO" id="GO:0005737">
    <property type="term" value="C:cytoplasm"/>
    <property type="evidence" value="ECO:0000250"/>
    <property type="project" value="UniProtKB"/>
</dbReference>
<dbReference type="GO" id="GO:0006446">
    <property type="term" value="P:regulation of translational initiation"/>
    <property type="evidence" value="ECO:0000250"/>
    <property type="project" value="UniProtKB"/>
</dbReference>
<dbReference type="CDD" id="cd11560">
    <property type="entry name" value="W2_eIF5C_like"/>
    <property type="match status" value="1"/>
</dbReference>
<dbReference type="FunFam" id="1.25.40.180:FF:000006">
    <property type="entry name" value="Basic leucine zipper and W2 domain-containing protein 1"/>
    <property type="match status" value="1"/>
</dbReference>
<dbReference type="Gene3D" id="1.25.40.180">
    <property type="match status" value="1"/>
</dbReference>
<dbReference type="InterPro" id="IPR016024">
    <property type="entry name" value="ARM-type_fold"/>
</dbReference>
<dbReference type="InterPro" id="IPR051245">
    <property type="entry name" value="eIF5-mimic_regulator"/>
</dbReference>
<dbReference type="InterPro" id="IPR043510">
    <property type="entry name" value="W2_BZW1/2"/>
</dbReference>
<dbReference type="InterPro" id="IPR003307">
    <property type="entry name" value="W2_domain"/>
</dbReference>
<dbReference type="PANTHER" id="PTHR14208">
    <property type="entry name" value="BASIC LEUCINE ZIPPER AND W2 DOMAIN-CONTAINING PROTEIN"/>
    <property type="match status" value="1"/>
</dbReference>
<dbReference type="PANTHER" id="PTHR14208:SF7">
    <property type="entry name" value="EIF5-MIMIC PROTEIN 1"/>
    <property type="match status" value="1"/>
</dbReference>
<dbReference type="Pfam" id="PF25504">
    <property type="entry name" value="HEAT_5MP1_2"/>
    <property type="match status" value="1"/>
</dbReference>
<dbReference type="Pfam" id="PF02020">
    <property type="entry name" value="W2"/>
    <property type="match status" value="1"/>
</dbReference>
<dbReference type="SMART" id="SM00515">
    <property type="entry name" value="eIF5C"/>
    <property type="match status" value="1"/>
</dbReference>
<dbReference type="SUPFAM" id="SSF48371">
    <property type="entry name" value="ARM repeat"/>
    <property type="match status" value="1"/>
</dbReference>
<dbReference type="PROSITE" id="PS51363">
    <property type="entry name" value="W2"/>
    <property type="match status" value="1"/>
</dbReference>
<organism>
    <name type="scientific">Mus musculus</name>
    <name type="common">Mouse</name>
    <dbReference type="NCBI Taxonomy" id="10090"/>
    <lineage>
        <taxon>Eukaryota</taxon>
        <taxon>Metazoa</taxon>
        <taxon>Chordata</taxon>
        <taxon>Craniata</taxon>
        <taxon>Vertebrata</taxon>
        <taxon>Euteleostomi</taxon>
        <taxon>Mammalia</taxon>
        <taxon>Eutheria</taxon>
        <taxon>Euarchontoglires</taxon>
        <taxon>Glires</taxon>
        <taxon>Rodentia</taxon>
        <taxon>Myomorpha</taxon>
        <taxon>Muroidea</taxon>
        <taxon>Muridae</taxon>
        <taxon>Murinae</taxon>
        <taxon>Mus</taxon>
        <taxon>Mus</taxon>
    </lineage>
</organism>
<gene>
    <name type="primary">Bzw2</name>
    <name evidence="2" type="synonym">5mp1</name>
</gene>
<protein>
    <recommendedName>
        <fullName evidence="2">eIF5-mimic protein 1</fullName>
    </recommendedName>
    <alternativeName>
        <fullName>Basic leucine zipper and W2 domain-containing protein 2</fullName>
    </alternativeName>
</protein>
<accession>Q91VK1</accession>
<accession>Q9D0N4</accession>
<keyword id="KW-0007">Acetylation</keyword>
<keyword id="KW-0963">Cytoplasm</keyword>
<keyword id="KW-0597">Phosphoprotein</keyword>
<keyword id="KW-1185">Reference proteome</keyword>
<keyword id="KW-0810">Translation regulation</keyword>
<comment type="function">
    <text evidence="2">Translation initiation regulator which represses non-AUG initiated translation and repeat-associated non-AUG (RAN) initiated translation by acting as a competitive inhibitor of eukaryotic translation initiation factor 5 (EIF5) function (By similarity). Increases the accuracy of translation initiation by impeding EIF5-dependent translation from non-AUG codons by competing with it for interaction with EIF2S2 within the 43S pre-initiation complex (PIC) in an EIF3C-binding dependent manner (By similarity).</text>
</comment>
<comment type="subunit">
    <text evidence="2">Interacts with EIF3E, EIF2S2 and EIF3C.</text>
</comment>
<comment type="subcellular location">
    <subcellularLocation>
        <location evidence="2">Cytoplasm</location>
    </subcellularLocation>
</comment>
<comment type="similarity">
    <text evidence="5">Belongs to the BZW family.</text>
</comment>
<sequence length="419" mass="48063">MNKHQKPVLTGQRFKTRKRDEKEKFEPTVFRDTLVQGLNEAGDDLEAVAKFLDSTGSRLDYRRYADTLFDILVAGSMLAPGGTRIDDGDKTKMTNHCVFSANEDHETIRNYAQVFNKLIRRYKYLEKAFEDEMKKLLLFLKAFSEAEQTKLAMLSGILLGNGTLPATILTSLFTDSLVKEGIAASFAVKLFKAWMAEKDANSVTSSLRKANLDKRLLELFPVNRQSVDHFAKYFTDAGLKELSDFLRVQQSLGTRKELQKELQERLSQECPIKEVVLYVKEEMKRNDLPETAVIGLLWTCIMNAVEWNKKEELVAEQALKHLKQYAPLLAVFSSQGQSELVLLQKVQEYCYDNIHFMKAFQKIVVLFYKADVLSEEAILKWYKEAHAAKGKSVFLDQMKKFVEWLQNAEEESESEGEES</sequence>
<evidence type="ECO:0000250" key="1">
    <source>
        <dbReference type="UniProtKB" id="Q9WTT7"/>
    </source>
</evidence>
<evidence type="ECO:0000250" key="2">
    <source>
        <dbReference type="UniProtKB" id="Q9Y6E2"/>
    </source>
</evidence>
<evidence type="ECO:0000255" key="3">
    <source>
        <dbReference type="PROSITE-ProRule" id="PRU00695"/>
    </source>
</evidence>
<evidence type="ECO:0000256" key="4">
    <source>
        <dbReference type="SAM" id="MobiDB-lite"/>
    </source>
</evidence>
<evidence type="ECO:0000305" key="5"/>
<evidence type="ECO:0007744" key="6">
    <source>
    </source>
</evidence>
<feature type="chain" id="PRO_0000254620" description="eIF5-mimic protein 1">
    <location>
        <begin position="1"/>
        <end position="419"/>
    </location>
</feature>
<feature type="domain" description="W2" evidence="3">
    <location>
        <begin position="248"/>
        <end position="415"/>
    </location>
</feature>
<feature type="region of interest" description="Disordered" evidence="4">
    <location>
        <begin position="1"/>
        <end position="22"/>
    </location>
</feature>
<feature type="modified residue" description="N6-acetyllysine" evidence="2">
    <location>
        <position position="117"/>
    </location>
</feature>
<feature type="modified residue" description="Phosphoserine" evidence="6">
    <location>
        <position position="412"/>
    </location>
</feature>
<feature type="modified residue" description="Phosphoserine" evidence="2">
    <location>
        <position position="414"/>
    </location>
</feature>
<feature type="modified residue" description="Phosphoserine" evidence="1">
    <location>
        <position position="419"/>
    </location>
</feature>
<feature type="sequence conflict" description="In Ref. 1; BAB27495." evidence="5" ref="1">
    <original>F</original>
    <variation>L</variation>
    <location>
        <position position="69"/>
    </location>
</feature>
<feature type="sequence conflict" description="In Ref. 1; BAB27495." evidence="5" ref="1">
    <original>A</original>
    <variation>R</variation>
    <location>
        <position position="326"/>
    </location>
</feature>
<proteinExistence type="evidence at protein level"/>
<reference key="1">
    <citation type="journal article" date="2005" name="Science">
        <title>The transcriptional landscape of the mammalian genome.</title>
        <authorList>
            <person name="Carninci P."/>
            <person name="Kasukawa T."/>
            <person name="Katayama S."/>
            <person name="Gough J."/>
            <person name="Frith M.C."/>
            <person name="Maeda N."/>
            <person name="Oyama R."/>
            <person name="Ravasi T."/>
            <person name="Lenhard B."/>
            <person name="Wells C."/>
            <person name="Kodzius R."/>
            <person name="Shimokawa K."/>
            <person name="Bajic V.B."/>
            <person name="Brenner S.E."/>
            <person name="Batalov S."/>
            <person name="Forrest A.R."/>
            <person name="Zavolan M."/>
            <person name="Davis M.J."/>
            <person name="Wilming L.G."/>
            <person name="Aidinis V."/>
            <person name="Allen J.E."/>
            <person name="Ambesi-Impiombato A."/>
            <person name="Apweiler R."/>
            <person name="Aturaliya R.N."/>
            <person name="Bailey T.L."/>
            <person name="Bansal M."/>
            <person name="Baxter L."/>
            <person name="Beisel K.W."/>
            <person name="Bersano T."/>
            <person name="Bono H."/>
            <person name="Chalk A.M."/>
            <person name="Chiu K.P."/>
            <person name="Choudhary V."/>
            <person name="Christoffels A."/>
            <person name="Clutterbuck D.R."/>
            <person name="Crowe M.L."/>
            <person name="Dalla E."/>
            <person name="Dalrymple B.P."/>
            <person name="de Bono B."/>
            <person name="Della Gatta G."/>
            <person name="di Bernardo D."/>
            <person name="Down T."/>
            <person name="Engstrom P."/>
            <person name="Fagiolini M."/>
            <person name="Faulkner G."/>
            <person name="Fletcher C.F."/>
            <person name="Fukushima T."/>
            <person name="Furuno M."/>
            <person name="Futaki S."/>
            <person name="Gariboldi M."/>
            <person name="Georgii-Hemming P."/>
            <person name="Gingeras T.R."/>
            <person name="Gojobori T."/>
            <person name="Green R.E."/>
            <person name="Gustincich S."/>
            <person name="Harbers M."/>
            <person name="Hayashi Y."/>
            <person name="Hensch T.K."/>
            <person name="Hirokawa N."/>
            <person name="Hill D."/>
            <person name="Huminiecki L."/>
            <person name="Iacono M."/>
            <person name="Ikeo K."/>
            <person name="Iwama A."/>
            <person name="Ishikawa T."/>
            <person name="Jakt M."/>
            <person name="Kanapin A."/>
            <person name="Katoh M."/>
            <person name="Kawasawa Y."/>
            <person name="Kelso J."/>
            <person name="Kitamura H."/>
            <person name="Kitano H."/>
            <person name="Kollias G."/>
            <person name="Krishnan S.P."/>
            <person name="Kruger A."/>
            <person name="Kummerfeld S.K."/>
            <person name="Kurochkin I.V."/>
            <person name="Lareau L.F."/>
            <person name="Lazarevic D."/>
            <person name="Lipovich L."/>
            <person name="Liu J."/>
            <person name="Liuni S."/>
            <person name="McWilliam S."/>
            <person name="Madan Babu M."/>
            <person name="Madera M."/>
            <person name="Marchionni L."/>
            <person name="Matsuda H."/>
            <person name="Matsuzawa S."/>
            <person name="Miki H."/>
            <person name="Mignone F."/>
            <person name="Miyake S."/>
            <person name="Morris K."/>
            <person name="Mottagui-Tabar S."/>
            <person name="Mulder N."/>
            <person name="Nakano N."/>
            <person name="Nakauchi H."/>
            <person name="Ng P."/>
            <person name="Nilsson R."/>
            <person name="Nishiguchi S."/>
            <person name="Nishikawa S."/>
            <person name="Nori F."/>
            <person name="Ohara O."/>
            <person name="Okazaki Y."/>
            <person name="Orlando V."/>
            <person name="Pang K.C."/>
            <person name="Pavan W.J."/>
            <person name="Pavesi G."/>
            <person name="Pesole G."/>
            <person name="Petrovsky N."/>
            <person name="Piazza S."/>
            <person name="Reed J."/>
            <person name="Reid J.F."/>
            <person name="Ring B.Z."/>
            <person name="Ringwald M."/>
            <person name="Rost B."/>
            <person name="Ruan Y."/>
            <person name="Salzberg S.L."/>
            <person name="Sandelin A."/>
            <person name="Schneider C."/>
            <person name="Schoenbach C."/>
            <person name="Sekiguchi K."/>
            <person name="Semple C.A."/>
            <person name="Seno S."/>
            <person name="Sessa L."/>
            <person name="Sheng Y."/>
            <person name="Shibata Y."/>
            <person name="Shimada H."/>
            <person name="Shimada K."/>
            <person name="Silva D."/>
            <person name="Sinclair B."/>
            <person name="Sperling S."/>
            <person name="Stupka E."/>
            <person name="Sugiura K."/>
            <person name="Sultana R."/>
            <person name="Takenaka Y."/>
            <person name="Taki K."/>
            <person name="Tammoja K."/>
            <person name="Tan S.L."/>
            <person name="Tang S."/>
            <person name="Taylor M.S."/>
            <person name="Tegner J."/>
            <person name="Teichmann S.A."/>
            <person name="Ueda H.R."/>
            <person name="van Nimwegen E."/>
            <person name="Verardo R."/>
            <person name="Wei C.L."/>
            <person name="Yagi K."/>
            <person name="Yamanishi H."/>
            <person name="Zabarovsky E."/>
            <person name="Zhu S."/>
            <person name="Zimmer A."/>
            <person name="Hide W."/>
            <person name="Bult C."/>
            <person name="Grimmond S.M."/>
            <person name="Teasdale R.D."/>
            <person name="Liu E.T."/>
            <person name="Brusic V."/>
            <person name="Quackenbush J."/>
            <person name="Wahlestedt C."/>
            <person name="Mattick J.S."/>
            <person name="Hume D.A."/>
            <person name="Kai C."/>
            <person name="Sasaki D."/>
            <person name="Tomaru Y."/>
            <person name="Fukuda S."/>
            <person name="Kanamori-Katayama M."/>
            <person name="Suzuki M."/>
            <person name="Aoki J."/>
            <person name="Arakawa T."/>
            <person name="Iida J."/>
            <person name="Imamura K."/>
            <person name="Itoh M."/>
            <person name="Kato T."/>
            <person name="Kawaji H."/>
            <person name="Kawagashira N."/>
            <person name="Kawashima T."/>
            <person name="Kojima M."/>
            <person name="Kondo S."/>
            <person name="Konno H."/>
            <person name="Nakano K."/>
            <person name="Ninomiya N."/>
            <person name="Nishio T."/>
            <person name="Okada M."/>
            <person name="Plessy C."/>
            <person name="Shibata K."/>
            <person name="Shiraki T."/>
            <person name="Suzuki S."/>
            <person name="Tagami M."/>
            <person name="Waki K."/>
            <person name="Watahiki A."/>
            <person name="Okamura-Oho Y."/>
            <person name="Suzuki H."/>
            <person name="Kawai J."/>
            <person name="Hayashizaki Y."/>
        </authorList>
    </citation>
    <scope>NUCLEOTIDE SEQUENCE [LARGE SCALE MRNA]</scope>
    <source>
        <strain>C57BL/6J</strain>
        <tissue>Embryo</tissue>
    </source>
</reference>
<reference key="2">
    <citation type="journal article" date="2004" name="Genome Res.">
        <title>The status, quality, and expansion of the NIH full-length cDNA project: the Mammalian Gene Collection (MGC).</title>
        <authorList>
            <consortium name="The MGC Project Team"/>
        </authorList>
    </citation>
    <scope>NUCLEOTIDE SEQUENCE [LARGE SCALE MRNA]</scope>
    <source>
        <strain>FVB/N</strain>
        <tissue>Mammary tumor</tissue>
    </source>
</reference>
<reference key="3">
    <citation type="journal article" date="2004" name="Mol. Cell. Proteomics">
        <title>Phosphoproteomic analysis of the developing mouse brain.</title>
        <authorList>
            <person name="Ballif B.A."/>
            <person name="Villen J."/>
            <person name="Beausoleil S.A."/>
            <person name="Schwartz D."/>
            <person name="Gygi S.P."/>
        </authorList>
    </citation>
    <scope>IDENTIFICATION BY MASS SPECTROMETRY [LARGE SCALE ANALYSIS]</scope>
    <source>
        <tissue>Embryonic brain</tissue>
    </source>
</reference>
<reference key="4">
    <citation type="journal article" date="2010" name="Cell">
        <title>A tissue-specific atlas of mouse protein phosphorylation and expression.</title>
        <authorList>
            <person name="Huttlin E.L."/>
            <person name="Jedrychowski M.P."/>
            <person name="Elias J.E."/>
            <person name="Goswami T."/>
            <person name="Rad R."/>
            <person name="Beausoleil S.A."/>
            <person name="Villen J."/>
            <person name="Haas W."/>
            <person name="Sowa M.E."/>
            <person name="Gygi S.P."/>
        </authorList>
    </citation>
    <scope>PHOSPHORYLATION [LARGE SCALE ANALYSIS] AT SER-412</scope>
    <scope>IDENTIFICATION BY MASS SPECTROMETRY [LARGE SCALE ANALYSIS]</scope>
    <source>
        <tissue>Brown adipose tissue</tissue>
        <tissue>Heart</tissue>
        <tissue>Kidney</tissue>
        <tissue>Lung</tissue>
        <tissue>Pancreas</tissue>
        <tissue>Spleen</tissue>
    </source>
</reference>
<name>5MP1_MOUSE</name>